<evidence type="ECO:0000255" key="1">
    <source>
        <dbReference type="HAMAP-Rule" id="MF_01629"/>
    </source>
</evidence>
<evidence type="ECO:0000305" key="2"/>
<dbReference type="EC" id="1.4.3.5" evidence="1"/>
<dbReference type="EMBL" id="CP000057">
    <property type="protein sequence ID" value="AAX87909.1"/>
    <property type="status" value="ALT_INIT"/>
    <property type="molecule type" value="Genomic_DNA"/>
</dbReference>
<dbReference type="RefSeq" id="WP_011272252.1">
    <property type="nucleotide sequence ID" value="NC_007146.2"/>
</dbReference>
<dbReference type="SMR" id="Q4QM38"/>
<dbReference type="KEGG" id="hit:NTHI1032"/>
<dbReference type="HOGENOM" id="CLU_032263_2_2_6"/>
<dbReference type="UniPathway" id="UPA01068">
    <property type="reaction ID" value="UER00304"/>
</dbReference>
<dbReference type="UniPathway" id="UPA01068">
    <property type="reaction ID" value="UER00305"/>
</dbReference>
<dbReference type="Proteomes" id="UP000002525">
    <property type="component" value="Chromosome"/>
</dbReference>
<dbReference type="GO" id="GO:0010181">
    <property type="term" value="F:FMN binding"/>
    <property type="evidence" value="ECO:0007669"/>
    <property type="project" value="UniProtKB-UniRule"/>
</dbReference>
<dbReference type="GO" id="GO:0004733">
    <property type="term" value="F:pyridoxamine phosphate oxidase activity"/>
    <property type="evidence" value="ECO:0007669"/>
    <property type="project" value="UniProtKB-UniRule"/>
</dbReference>
<dbReference type="GO" id="GO:0008615">
    <property type="term" value="P:pyridoxine biosynthetic process"/>
    <property type="evidence" value="ECO:0007669"/>
    <property type="project" value="UniProtKB-KW"/>
</dbReference>
<dbReference type="FunFam" id="2.30.110.10:FF:000014">
    <property type="entry name" value="Pyridoxine/pyridoxamine 5'-phosphate oxidase"/>
    <property type="match status" value="1"/>
</dbReference>
<dbReference type="Gene3D" id="2.30.110.10">
    <property type="entry name" value="Electron Transport, Fmn-binding Protein, Chain A"/>
    <property type="match status" value="1"/>
</dbReference>
<dbReference type="HAMAP" id="MF_01629">
    <property type="entry name" value="PdxH"/>
    <property type="match status" value="1"/>
</dbReference>
<dbReference type="InterPro" id="IPR000659">
    <property type="entry name" value="Pyridox_Oxase"/>
</dbReference>
<dbReference type="InterPro" id="IPR019740">
    <property type="entry name" value="Pyridox_Oxase_CS"/>
</dbReference>
<dbReference type="InterPro" id="IPR011576">
    <property type="entry name" value="Pyridox_Oxase_N"/>
</dbReference>
<dbReference type="InterPro" id="IPR019576">
    <property type="entry name" value="Pyridoxamine_oxidase_dimer_C"/>
</dbReference>
<dbReference type="InterPro" id="IPR012349">
    <property type="entry name" value="Split_barrel_FMN-bd"/>
</dbReference>
<dbReference type="NCBIfam" id="TIGR00558">
    <property type="entry name" value="pdxH"/>
    <property type="match status" value="1"/>
</dbReference>
<dbReference type="NCBIfam" id="NF004231">
    <property type="entry name" value="PRK05679.1"/>
    <property type="match status" value="1"/>
</dbReference>
<dbReference type="PANTHER" id="PTHR10851:SF0">
    <property type="entry name" value="PYRIDOXINE-5'-PHOSPHATE OXIDASE"/>
    <property type="match status" value="1"/>
</dbReference>
<dbReference type="PANTHER" id="PTHR10851">
    <property type="entry name" value="PYRIDOXINE-5-PHOSPHATE OXIDASE"/>
    <property type="match status" value="1"/>
</dbReference>
<dbReference type="Pfam" id="PF10590">
    <property type="entry name" value="PNP_phzG_C"/>
    <property type="match status" value="1"/>
</dbReference>
<dbReference type="Pfam" id="PF01243">
    <property type="entry name" value="PNPOx_N"/>
    <property type="match status" value="1"/>
</dbReference>
<dbReference type="PIRSF" id="PIRSF000190">
    <property type="entry name" value="Pyd_amn-ph_oxd"/>
    <property type="match status" value="1"/>
</dbReference>
<dbReference type="SUPFAM" id="SSF50475">
    <property type="entry name" value="FMN-binding split barrel"/>
    <property type="match status" value="1"/>
</dbReference>
<dbReference type="PROSITE" id="PS01064">
    <property type="entry name" value="PYRIDOX_OXIDASE"/>
    <property type="match status" value="1"/>
</dbReference>
<accession>Q4QM38</accession>
<sequence length="210" mass="24518">MELHNIRDEYTKRVLSQHDCHKNPISQFEQWQKEAIHAQVNEPTAMNIATVDEQGRPNSRMVLLKEVNEQGFVFFTNYLSRKGGCIERNPYVALTFFWPELERQVRIEGKAVKIPAEQSDKYFATRPYTSRIGAWASEQSAVISNYKSLLAKAALVAAKHPLNVPRPDYWGGYLVVPETVEFWQGRPSRLHDRIRYRKESDNWIRERLSP</sequence>
<name>PDXH_HAEI8</name>
<comment type="function">
    <text evidence="1">Catalyzes the oxidation of either pyridoxine 5'-phosphate (PNP) or pyridoxamine 5'-phosphate (PMP) into pyridoxal 5'-phosphate (PLP).</text>
</comment>
<comment type="catalytic activity">
    <reaction evidence="1">
        <text>pyridoxamine 5'-phosphate + O2 + H2O = pyridoxal 5'-phosphate + H2O2 + NH4(+)</text>
        <dbReference type="Rhea" id="RHEA:15817"/>
        <dbReference type="ChEBI" id="CHEBI:15377"/>
        <dbReference type="ChEBI" id="CHEBI:15379"/>
        <dbReference type="ChEBI" id="CHEBI:16240"/>
        <dbReference type="ChEBI" id="CHEBI:28938"/>
        <dbReference type="ChEBI" id="CHEBI:58451"/>
        <dbReference type="ChEBI" id="CHEBI:597326"/>
        <dbReference type="EC" id="1.4.3.5"/>
    </reaction>
</comment>
<comment type="catalytic activity">
    <reaction evidence="1">
        <text>pyridoxine 5'-phosphate + O2 = pyridoxal 5'-phosphate + H2O2</text>
        <dbReference type="Rhea" id="RHEA:15149"/>
        <dbReference type="ChEBI" id="CHEBI:15379"/>
        <dbReference type="ChEBI" id="CHEBI:16240"/>
        <dbReference type="ChEBI" id="CHEBI:58589"/>
        <dbReference type="ChEBI" id="CHEBI:597326"/>
        <dbReference type="EC" id="1.4.3.5"/>
    </reaction>
</comment>
<comment type="cofactor">
    <cofactor evidence="1">
        <name>FMN</name>
        <dbReference type="ChEBI" id="CHEBI:58210"/>
    </cofactor>
    <text evidence="1">Binds 1 FMN per subunit.</text>
</comment>
<comment type="pathway">
    <text evidence="1">Cofactor metabolism; pyridoxal 5'-phosphate salvage; pyridoxal 5'-phosphate from pyridoxamine 5'-phosphate: step 1/1.</text>
</comment>
<comment type="pathway">
    <text evidence="1">Cofactor metabolism; pyridoxal 5'-phosphate salvage; pyridoxal 5'-phosphate from pyridoxine 5'-phosphate: step 1/1.</text>
</comment>
<comment type="subunit">
    <text evidence="1">Homodimer.</text>
</comment>
<comment type="similarity">
    <text evidence="1">Belongs to the pyridoxamine 5'-phosphate oxidase family.</text>
</comment>
<comment type="sequence caution" evidence="2">
    <conflict type="erroneous initiation">
        <sequence resource="EMBL-CDS" id="AAX87909"/>
    </conflict>
</comment>
<protein>
    <recommendedName>
        <fullName evidence="1">Pyridoxine/pyridoxamine 5'-phosphate oxidase</fullName>
        <ecNumber evidence="1">1.4.3.5</ecNumber>
    </recommendedName>
    <alternativeName>
        <fullName evidence="1">PNP/PMP oxidase</fullName>
        <shortName evidence="1">PNPOx</shortName>
    </alternativeName>
    <alternativeName>
        <fullName evidence="1">Pyridoxal 5'-phosphate synthase</fullName>
    </alternativeName>
</protein>
<proteinExistence type="inferred from homology"/>
<gene>
    <name evidence="1" type="primary">pdxH</name>
    <name type="ordered locus">NTHI1032</name>
</gene>
<feature type="chain" id="PRO_0000167712" description="Pyridoxine/pyridoxamine 5'-phosphate oxidase">
    <location>
        <begin position="1"/>
        <end position="210"/>
    </location>
</feature>
<feature type="binding site" evidence="1">
    <location>
        <begin position="7"/>
        <end position="10"/>
    </location>
    <ligand>
        <name>substrate</name>
    </ligand>
</feature>
<feature type="binding site" evidence="1">
    <location>
        <begin position="60"/>
        <end position="65"/>
    </location>
    <ligand>
        <name>FMN</name>
        <dbReference type="ChEBI" id="CHEBI:58210"/>
    </ligand>
</feature>
<feature type="binding site" evidence="1">
    <location>
        <position position="65"/>
    </location>
    <ligand>
        <name>substrate</name>
    </ligand>
</feature>
<feature type="binding site" evidence="1">
    <location>
        <begin position="75"/>
        <end position="76"/>
    </location>
    <ligand>
        <name>FMN</name>
        <dbReference type="ChEBI" id="CHEBI:58210"/>
    </ligand>
</feature>
<feature type="binding site" evidence="1">
    <location>
        <position position="81"/>
    </location>
    <ligand>
        <name>FMN</name>
        <dbReference type="ChEBI" id="CHEBI:58210"/>
    </ligand>
</feature>
<feature type="binding site" evidence="1">
    <location>
        <position position="82"/>
    </location>
    <ligand>
        <name>FMN</name>
        <dbReference type="ChEBI" id="CHEBI:58210"/>
    </ligand>
</feature>
<feature type="binding site" evidence="1">
    <location>
        <position position="104"/>
    </location>
    <ligand>
        <name>FMN</name>
        <dbReference type="ChEBI" id="CHEBI:58210"/>
    </ligand>
</feature>
<feature type="binding site" evidence="1">
    <location>
        <position position="122"/>
    </location>
    <ligand>
        <name>substrate</name>
    </ligand>
</feature>
<feature type="binding site" evidence="1">
    <location>
        <position position="126"/>
    </location>
    <ligand>
        <name>substrate</name>
    </ligand>
</feature>
<feature type="binding site" evidence="1">
    <location>
        <position position="130"/>
    </location>
    <ligand>
        <name>substrate</name>
    </ligand>
</feature>
<feature type="binding site" evidence="1">
    <location>
        <begin position="139"/>
        <end position="140"/>
    </location>
    <ligand>
        <name>FMN</name>
        <dbReference type="ChEBI" id="CHEBI:58210"/>
    </ligand>
</feature>
<feature type="binding site" evidence="1">
    <location>
        <position position="183"/>
    </location>
    <ligand>
        <name>FMN</name>
        <dbReference type="ChEBI" id="CHEBI:58210"/>
    </ligand>
</feature>
<feature type="binding site" evidence="1">
    <location>
        <begin position="189"/>
        <end position="191"/>
    </location>
    <ligand>
        <name>substrate</name>
    </ligand>
</feature>
<feature type="binding site" evidence="1">
    <location>
        <position position="193"/>
    </location>
    <ligand>
        <name>FMN</name>
        <dbReference type="ChEBI" id="CHEBI:58210"/>
    </ligand>
</feature>
<organism>
    <name type="scientific">Haemophilus influenzae (strain 86-028NP)</name>
    <dbReference type="NCBI Taxonomy" id="281310"/>
    <lineage>
        <taxon>Bacteria</taxon>
        <taxon>Pseudomonadati</taxon>
        <taxon>Pseudomonadota</taxon>
        <taxon>Gammaproteobacteria</taxon>
        <taxon>Pasteurellales</taxon>
        <taxon>Pasteurellaceae</taxon>
        <taxon>Haemophilus</taxon>
    </lineage>
</organism>
<reference key="1">
    <citation type="journal article" date="2005" name="J. Bacteriol.">
        <title>Genomic sequence of an otitis media isolate of nontypeable Haemophilus influenzae: comparative study with H. influenzae serotype d, strain KW20.</title>
        <authorList>
            <person name="Harrison A."/>
            <person name="Dyer D.W."/>
            <person name="Gillaspy A."/>
            <person name="Ray W.C."/>
            <person name="Mungur R."/>
            <person name="Carson M.B."/>
            <person name="Zhong H."/>
            <person name="Gipson J."/>
            <person name="Gipson M."/>
            <person name="Johnson L.S."/>
            <person name="Lewis L."/>
            <person name="Bakaletz L.O."/>
            <person name="Munson R.S. Jr."/>
        </authorList>
    </citation>
    <scope>NUCLEOTIDE SEQUENCE [LARGE SCALE GENOMIC DNA]</scope>
    <source>
        <strain>86-028NP</strain>
    </source>
</reference>
<keyword id="KW-0285">Flavoprotein</keyword>
<keyword id="KW-0288">FMN</keyword>
<keyword id="KW-0560">Oxidoreductase</keyword>
<keyword id="KW-0664">Pyridoxine biosynthesis</keyword>